<dbReference type="EC" id="2.1.3.-" evidence="1"/>
<dbReference type="EMBL" id="CR954246">
    <property type="protein sequence ID" value="CAI87009.1"/>
    <property type="molecule type" value="Genomic_DNA"/>
</dbReference>
<dbReference type="SMR" id="Q3IIQ4"/>
<dbReference type="STRING" id="326442.PSHAa1945"/>
<dbReference type="KEGG" id="pha:PSHAa1945"/>
<dbReference type="eggNOG" id="COG2226">
    <property type="taxonomic scope" value="Bacteria"/>
</dbReference>
<dbReference type="HOGENOM" id="CLU_078475_0_0_6"/>
<dbReference type="BioCyc" id="PHAL326442:PSHA_RS09605-MONOMER"/>
<dbReference type="Proteomes" id="UP000006843">
    <property type="component" value="Chromosome I"/>
</dbReference>
<dbReference type="GO" id="GO:0016743">
    <property type="term" value="F:carboxyl- or carbamoyltransferase activity"/>
    <property type="evidence" value="ECO:0007669"/>
    <property type="project" value="UniProtKB-UniRule"/>
</dbReference>
<dbReference type="GO" id="GO:1904047">
    <property type="term" value="F:S-adenosyl-L-methionine binding"/>
    <property type="evidence" value="ECO:0007669"/>
    <property type="project" value="UniProtKB-UniRule"/>
</dbReference>
<dbReference type="GO" id="GO:0002098">
    <property type="term" value="P:tRNA wobble uridine modification"/>
    <property type="evidence" value="ECO:0007669"/>
    <property type="project" value="InterPro"/>
</dbReference>
<dbReference type="CDD" id="cd02440">
    <property type="entry name" value="AdoMet_MTases"/>
    <property type="match status" value="1"/>
</dbReference>
<dbReference type="Gene3D" id="3.40.50.150">
    <property type="entry name" value="Vaccinia Virus protein VP39"/>
    <property type="match status" value="1"/>
</dbReference>
<dbReference type="HAMAP" id="MF_01589">
    <property type="entry name" value="Cx_SAM_synthase"/>
    <property type="match status" value="1"/>
</dbReference>
<dbReference type="InterPro" id="IPR005271">
    <property type="entry name" value="CmoA"/>
</dbReference>
<dbReference type="InterPro" id="IPR041698">
    <property type="entry name" value="Methyltransf_25"/>
</dbReference>
<dbReference type="InterPro" id="IPR029063">
    <property type="entry name" value="SAM-dependent_MTases_sf"/>
</dbReference>
<dbReference type="NCBIfam" id="TIGR00740">
    <property type="entry name" value="carboxy-S-adenosyl-L-methionine synthase CmoA"/>
    <property type="match status" value="1"/>
</dbReference>
<dbReference type="NCBIfam" id="NF011995">
    <property type="entry name" value="PRK15451.1"/>
    <property type="match status" value="1"/>
</dbReference>
<dbReference type="PANTHER" id="PTHR43861:SF2">
    <property type="entry name" value="CARBOXY-S-ADENOSYL-L-METHIONINE SYNTHASE"/>
    <property type="match status" value="1"/>
</dbReference>
<dbReference type="PANTHER" id="PTHR43861">
    <property type="entry name" value="TRANS-ACONITATE 2-METHYLTRANSFERASE-RELATED"/>
    <property type="match status" value="1"/>
</dbReference>
<dbReference type="Pfam" id="PF13649">
    <property type="entry name" value="Methyltransf_25"/>
    <property type="match status" value="1"/>
</dbReference>
<dbReference type="PIRSF" id="PIRSF006325">
    <property type="entry name" value="MeTrfase_bac"/>
    <property type="match status" value="1"/>
</dbReference>
<dbReference type="SUPFAM" id="SSF53335">
    <property type="entry name" value="S-adenosyl-L-methionine-dependent methyltransferases"/>
    <property type="match status" value="1"/>
</dbReference>
<reference key="1">
    <citation type="journal article" date="2005" name="Genome Res.">
        <title>Coping with cold: the genome of the versatile marine Antarctica bacterium Pseudoalteromonas haloplanktis TAC125.</title>
        <authorList>
            <person name="Medigue C."/>
            <person name="Krin E."/>
            <person name="Pascal G."/>
            <person name="Barbe V."/>
            <person name="Bernsel A."/>
            <person name="Bertin P.N."/>
            <person name="Cheung F."/>
            <person name="Cruveiller S."/>
            <person name="D'Amico S."/>
            <person name="Duilio A."/>
            <person name="Fang G."/>
            <person name="Feller G."/>
            <person name="Ho C."/>
            <person name="Mangenot S."/>
            <person name="Marino G."/>
            <person name="Nilsson J."/>
            <person name="Parrilli E."/>
            <person name="Rocha E.P.C."/>
            <person name="Rouy Z."/>
            <person name="Sekowska A."/>
            <person name="Tutino M.L."/>
            <person name="Vallenet D."/>
            <person name="von Heijne G."/>
            <person name="Danchin A."/>
        </authorList>
    </citation>
    <scope>NUCLEOTIDE SEQUENCE [LARGE SCALE GENOMIC DNA]</scope>
    <source>
        <strain>TAC 125</strain>
    </source>
</reference>
<name>CMOA_PSET1</name>
<feature type="chain" id="PRO_0000314355" description="Carboxy-S-adenosyl-L-methionine synthase">
    <location>
        <begin position="1"/>
        <end position="241"/>
    </location>
</feature>
<feature type="binding site" evidence="1">
    <location>
        <position position="38"/>
    </location>
    <ligand>
        <name>S-adenosyl-L-methionine</name>
        <dbReference type="ChEBI" id="CHEBI:59789"/>
    </ligand>
</feature>
<feature type="binding site" evidence="1">
    <location>
        <begin position="63"/>
        <end position="65"/>
    </location>
    <ligand>
        <name>S-adenosyl-L-methionine</name>
        <dbReference type="ChEBI" id="CHEBI:59789"/>
    </ligand>
</feature>
<feature type="binding site" evidence="1">
    <location>
        <begin position="88"/>
        <end position="89"/>
    </location>
    <ligand>
        <name>S-adenosyl-L-methionine</name>
        <dbReference type="ChEBI" id="CHEBI:59789"/>
    </ligand>
</feature>
<feature type="binding site" evidence="1">
    <location>
        <begin position="116"/>
        <end position="117"/>
    </location>
    <ligand>
        <name>S-adenosyl-L-methionine</name>
        <dbReference type="ChEBI" id="CHEBI:59789"/>
    </ligand>
</feature>
<feature type="binding site" evidence="1">
    <location>
        <position position="131"/>
    </location>
    <ligand>
        <name>S-adenosyl-L-methionine</name>
        <dbReference type="ChEBI" id="CHEBI:59789"/>
    </ligand>
</feature>
<feature type="binding site" evidence="1">
    <location>
        <position position="198"/>
    </location>
    <ligand>
        <name>S-adenosyl-L-methionine</name>
        <dbReference type="ChEBI" id="CHEBI:59789"/>
    </ligand>
</feature>
<keyword id="KW-1185">Reference proteome</keyword>
<keyword id="KW-0949">S-adenosyl-L-methionine</keyword>
<keyword id="KW-0808">Transferase</keyword>
<gene>
    <name evidence="1" type="primary">cmoA</name>
    <name type="ordered locus">PSHAa1945</name>
</gene>
<proteinExistence type="inferred from homology"/>
<evidence type="ECO:0000255" key="1">
    <source>
        <dbReference type="HAMAP-Rule" id="MF_01589"/>
    </source>
</evidence>
<sequence length="241" mass="27186">MTIKDSIYASEQQVKDFSFDQNVVEVFPDMIQRSVPGYATIVSTMGKLAGEYAQSNSNLYDLGCSLGAVTLSMRRNIRTDNCHIIAVDNSQAMVERCKVHLQGFKSEVPVTVTLGDINELEIQNASVVAMNFTLQFIPHAQRQAVLEKIYANLKPGGVLLLSEKIKAENELCDNLLIDLHHDFKRHNGYSELEISQKRTAIENVMRPDTLSTHFTRLKDIGFSQTQAWYQCFNFCSMIAIK</sequence>
<comment type="function">
    <text evidence="1">Catalyzes the conversion of S-adenosyl-L-methionine (SAM) to carboxy-S-adenosyl-L-methionine (Cx-SAM).</text>
</comment>
<comment type="catalytic activity">
    <reaction evidence="1">
        <text>prephenate + S-adenosyl-L-methionine = carboxy-S-adenosyl-L-methionine + 3-phenylpyruvate + H2O</text>
        <dbReference type="Rhea" id="RHEA:51692"/>
        <dbReference type="ChEBI" id="CHEBI:15377"/>
        <dbReference type="ChEBI" id="CHEBI:18005"/>
        <dbReference type="ChEBI" id="CHEBI:29934"/>
        <dbReference type="ChEBI" id="CHEBI:59789"/>
        <dbReference type="ChEBI" id="CHEBI:134278"/>
    </reaction>
</comment>
<comment type="subunit">
    <text evidence="1">Homodimer.</text>
</comment>
<comment type="similarity">
    <text evidence="1">Belongs to the class I-like SAM-binding methyltransferase superfamily. Cx-SAM synthase family.</text>
</comment>
<accession>Q3IIQ4</accession>
<organism>
    <name type="scientific">Pseudoalteromonas translucida (strain TAC 125)</name>
    <dbReference type="NCBI Taxonomy" id="326442"/>
    <lineage>
        <taxon>Bacteria</taxon>
        <taxon>Pseudomonadati</taxon>
        <taxon>Pseudomonadota</taxon>
        <taxon>Gammaproteobacteria</taxon>
        <taxon>Alteromonadales</taxon>
        <taxon>Pseudoalteromonadaceae</taxon>
        <taxon>Pseudoalteromonas</taxon>
    </lineage>
</organism>
<protein>
    <recommendedName>
        <fullName evidence="1">Carboxy-S-adenosyl-L-methionine synthase</fullName>
        <shortName evidence="1">Cx-SAM synthase</shortName>
        <ecNumber evidence="1">2.1.3.-</ecNumber>
    </recommendedName>
</protein>